<accession>A3D9I5</accession>
<name>RHLB_SHEB5</name>
<gene>
    <name evidence="1" type="primary">rhlB</name>
    <name type="ordered locus">Sbal_3928</name>
</gene>
<comment type="function">
    <text evidence="1">DEAD-box RNA helicase involved in RNA degradation. Has RNA-dependent ATPase activity and unwinds double-stranded RNA.</text>
</comment>
<comment type="catalytic activity">
    <reaction evidence="1">
        <text>ATP + H2O = ADP + phosphate + H(+)</text>
        <dbReference type="Rhea" id="RHEA:13065"/>
        <dbReference type="ChEBI" id="CHEBI:15377"/>
        <dbReference type="ChEBI" id="CHEBI:15378"/>
        <dbReference type="ChEBI" id="CHEBI:30616"/>
        <dbReference type="ChEBI" id="CHEBI:43474"/>
        <dbReference type="ChEBI" id="CHEBI:456216"/>
        <dbReference type="EC" id="3.6.4.13"/>
    </reaction>
</comment>
<comment type="subunit">
    <text evidence="1">Component of the RNA degradosome, which is a multiprotein complex involved in RNA processing and mRNA degradation.</text>
</comment>
<comment type="subcellular location">
    <subcellularLocation>
        <location evidence="1">Cytoplasm</location>
    </subcellularLocation>
</comment>
<comment type="similarity">
    <text evidence="1">Belongs to the DEAD box helicase family. RhlB subfamily.</text>
</comment>
<proteinExistence type="inferred from homology"/>
<evidence type="ECO:0000255" key="1">
    <source>
        <dbReference type="HAMAP-Rule" id="MF_00661"/>
    </source>
</evidence>
<evidence type="ECO:0000256" key="2">
    <source>
        <dbReference type="SAM" id="MobiDB-lite"/>
    </source>
</evidence>
<dbReference type="EC" id="3.6.4.13" evidence="1"/>
<dbReference type="EMBL" id="CP000563">
    <property type="protein sequence ID" value="ABN63398.1"/>
    <property type="molecule type" value="Genomic_DNA"/>
</dbReference>
<dbReference type="RefSeq" id="WP_006083359.1">
    <property type="nucleotide sequence ID" value="NC_009052.1"/>
</dbReference>
<dbReference type="SMR" id="A3D9I5"/>
<dbReference type="STRING" id="325240.Sbal_3928"/>
<dbReference type="KEGG" id="sbl:Sbal_3928"/>
<dbReference type="HOGENOM" id="CLU_003041_28_3_6"/>
<dbReference type="OrthoDB" id="9805696at2"/>
<dbReference type="Proteomes" id="UP000001557">
    <property type="component" value="Chromosome"/>
</dbReference>
<dbReference type="GO" id="GO:0005829">
    <property type="term" value="C:cytosol"/>
    <property type="evidence" value="ECO:0007669"/>
    <property type="project" value="TreeGrafter"/>
</dbReference>
<dbReference type="GO" id="GO:0005524">
    <property type="term" value="F:ATP binding"/>
    <property type="evidence" value="ECO:0007669"/>
    <property type="project" value="UniProtKB-UniRule"/>
</dbReference>
<dbReference type="GO" id="GO:0016887">
    <property type="term" value="F:ATP hydrolysis activity"/>
    <property type="evidence" value="ECO:0007669"/>
    <property type="project" value="RHEA"/>
</dbReference>
<dbReference type="GO" id="GO:0003723">
    <property type="term" value="F:RNA binding"/>
    <property type="evidence" value="ECO:0007669"/>
    <property type="project" value="UniProtKB-UniRule"/>
</dbReference>
<dbReference type="GO" id="GO:0003724">
    <property type="term" value="F:RNA helicase activity"/>
    <property type="evidence" value="ECO:0007669"/>
    <property type="project" value="UniProtKB-UniRule"/>
</dbReference>
<dbReference type="GO" id="GO:0006401">
    <property type="term" value="P:RNA catabolic process"/>
    <property type="evidence" value="ECO:0007669"/>
    <property type="project" value="UniProtKB-UniRule"/>
</dbReference>
<dbReference type="CDD" id="cd00268">
    <property type="entry name" value="DEADc"/>
    <property type="match status" value="1"/>
</dbReference>
<dbReference type="CDD" id="cd18787">
    <property type="entry name" value="SF2_C_DEAD"/>
    <property type="match status" value="1"/>
</dbReference>
<dbReference type="FunFam" id="3.40.50.300:FF:000008">
    <property type="entry name" value="ATP-dependent RNA helicase RhlB"/>
    <property type="match status" value="1"/>
</dbReference>
<dbReference type="FunFam" id="3.40.50.300:FF:000312">
    <property type="entry name" value="ATP-dependent RNA helicase RhlB"/>
    <property type="match status" value="1"/>
</dbReference>
<dbReference type="Gene3D" id="3.40.50.300">
    <property type="entry name" value="P-loop containing nucleotide triphosphate hydrolases"/>
    <property type="match status" value="2"/>
</dbReference>
<dbReference type="HAMAP" id="MF_00661">
    <property type="entry name" value="DEAD_helicase_RhlB"/>
    <property type="match status" value="1"/>
</dbReference>
<dbReference type="InterPro" id="IPR011545">
    <property type="entry name" value="DEAD/DEAH_box_helicase_dom"/>
</dbReference>
<dbReference type="InterPro" id="IPR050079">
    <property type="entry name" value="DEAD_box_RNA_helicase"/>
</dbReference>
<dbReference type="InterPro" id="IPR014001">
    <property type="entry name" value="Helicase_ATP-bd"/>
</dbReference>
<dbReference type="InterPro" id="IPR001650">
    <property type="entry name" value="Helicase_C-like"/>
</dbReference>
<dbReference type="InterPro" id="IPR027417">
    <property type="entry name" value="P-loop_NTPase"/>
</dbReference>
<dbReference type="InterPro" id="IPR000629">
    <property type="entry name" value="RNA-helicase_DEAD-box_CS"/>
</dbReference>
<dbReference type="InterPro" id="IPR023554">
    <property type="entry name" value="RNA_helicase_ATP-dep_RhlB"/>
</dbReference>
<dbReference type="InterPro" id="IPR014014">
    <property type="entry name" value="RNA_helicase_DEAD_Q_motif"/>
</dbReference>
<dbReference type="NCBIfam" id="NF003419">
    <property type="entry name" value="PRK04837.1"/>
    <property type="match status" value="1"/>
</dbReference>
<dbReference type="PANTHER" id="PTHR47959:SF10">
    <property type="entry name" value="ATP-DEPENDENT RNA HELICASE RHLB"/>
    <property type="match status" value="1"/>
</dbReference>
<dbReference type="PANTHER" id="PTHR47959">
    <property type="entry name" value="ATP-DEPENDENT RNA HELICASE RHLE-RELATED"/>
    <property type="match status" value="1"/>
</dbReference>
<dbReference type="Pfam" id="PF00270">
    <property type="entry name" value="DEAD"/>
    <property type="match status" value="1"/>
</dbReference>
<dbReference type="Pfam" id="PF00271">
    <property type="entry name" value="Helicase_C"/>
    <property type="match status" value="1"/>
</dbReference>
<dbReference type="SMART" id="SM00487">
    <property type="entry name" value="DEXDc"/>
    <property type="match status" value="1"/>
</dbReference>
<dbReference type="SMART" id="SM00490">
    <property type="entry name" value="HELICc"/>
    <property type="match status" value="1"/>
</dbReference>
<dbReference type="SUPFAM" id="SSF52540">
    <property type="entry name" value="P-loop containing nucleoside triphosphate hydrolases"/>
    <property type="match status" value="1"/>
</dbReference>
<dbReference type="PROSITE" id="PS00039">
    <property type="entry name" value="DEAD_ATP_HELICASE"/>
    <property type="match status" value="1"/>
</dbReference>
<dbReference type="PROSITE" id="PS51192">
    <property type="entry name" value="HELICASE_ATP_BIND_1"/>
    <property type="match status" value="1"/>
</dbReference>
<dbReference type="PROSITE" id="PS51194">
    <property type="entry name" value="HELICASE_CTER"/>
    <property type="match status" value="1"/>
</dbReference>
<dbReference type="PROSITE" id="PS51195">
    <property type="entry name" value="Q_MOTIF"/>
    <property type="match status" value="1"/>
</dbReference>
<feature type="chain" id="PRO_1000082857" description="ATP-dependent RNA helicase RhlB">
    <location>
        <begin position="1"/>
        <end position="438"/>
    </location>
</feature>
<feature type="domain" description="Helicase ATP-binding" evidence="1">
    <location>
        <begin position="40"/>
        <end position="219"/>
    </location>
</feature>
<feature type="domain" description="Helicase C-terminal" evidence="1">
    <location>
        <begin position="243"/>
        <end position="390"/>
    </location>
</feature>
<feature type="region of interest" description="Disordered" evidence="2">
    <location>
        <begin position="395"/>
        <end position="438"/>
    </location>
</feature>
<feature type="short sequence motif" description="Q motif">
    <location>
        <begin position="9"/>
        <end position="37"/>
    </location>
</feature>
<feature type="short sequence motif" description="DEAD box">
    <location>
        <begin position="165"/>
        <end position="168"/>
    </location>
</feature>
<feature type="compositionally biased region" description="Basic residues" evidence="2">
    <location>
        <begin position="428"/>
        <end position="438"/>
    </location>
</feature>
<feature type="binding site" evidence="1">
    <location>
        <begin position="53"/>
        <end position="60"/>
    </location>
    <ligand>
        <name>ATP</name>
        <dbReference type="ChEBI" id="CHEBI:30616"/>
    </ligand>
</feature>
<organism>
    <name type="scientific">Shewanella baltica (strain OS155 / ATCC BAA-1091)</name>
    <dbReference type="NCBI Taxonomy" id="325240"/>
    <lineage>
        <taxon>Bacteria</taxon>
        <taxon>Pseudomonadati</taxon>
        <taxon>Pseudomonadota</taxon>
        <taxon>Gammaproteobacteria</taxon>
        <taxon>Alteromonadales</taxon>
        <taxon>Shewanellaceae</taxon>
        <taxon>Shewanella</taxon>
    </lineage>
</organism>
<keyword id="KW-0067">ATP-binding</keyword>
<keyword id="KW-0963">Cytoplasm</keyword>
<keyword id="KW-0347">Helicase</keyword>
<keyword id="KW-0378">Hydrolase</keyword>
<keyword id="KW-0547">Nucleotide-binding</keyword>
<keyword id="KW-1185">Reference proteome</keyword>
<keyword id="KW-0694">RNA-binding</keyword>
<protein>
    <recommendedName>
        <fullName evidence="1">ATP-dependent RNA helicase RhlB</fullName>
        <ecNumber evidence="1">3.6.4.13</ecNumber>
    </recommendedName>
</protein>
<reference key="1">
    <citation type="submission" date="2007-02" db="EMBL/GenBank/DDBJ databases">
        <title>Complete sequence of chromosome of Shewanella baltica OS155.</title>
        <authorList>
            <consortium name="US DOE Joint Genome Institute"/>
            <person name="Copeland A."/>
            <person name="Lucas S."/>
            <person name="Lapidus A."/>
            <person name="Barry K."/>
            <person name="Detter J.C."/>
            <person name="Glavina del Rio T."/>
            <person name="Hammon N."/>
            <person name="Israni S."/>
            <person name="Dalin E."/>
            <person name="Tice H."/>
            <person name="Pitluck S."/>
            <person name="Sims D.R."/>
            <person name="Brettin T."/>
            <person name="Bruce D."/>
            <person name="Han C."/>
            <person name="Tapia R."/>
            <person name="Brainard J."/>
            <person name="Schmutz J."/>
            <person name="Larimer F."/>
            <person name="Land M."/>
            <person name="Hauser L."/>
            <person name="Kyrpides N."/>
            <person name="Mikhailova N."/>
            <person name="Brettar I."/>
            <person name="Klappenbach J."/>
            <person name="Konstantinidis K."/>
            <person name="Rodrigues J."/>
            <person name="Tiedje J."/>
            <person name="Richardson P."/>
        </authorList>
    </citation>
    <scope>NUCLEOTIDE SEQUENCE [LARGE SCALE GENOMIC DNA]</scope>
    <source>
        <strain>OS155 / ATCC BAA-1091</strain>
    </source>
</reference>
<sequence>MSETHLSTQRFADLPLHPEVKQALAENGFEFCTPIQALSLPVLLQSKDIAGQAQTGTGKTMAFLVATFNHLLSTPVPEGRLINQPRAIIMAPTRELAIQIAKDAILLAKHTHLKVGIVYGGESYDVQRKVLDQGVDILIGTTGRIIDYVRQGIIGLNSIQAVVLDEADRMFDLGFIKDIRFLFRRMPEANQRLNMLFSATLSMKVQELAYDHMNEPVKVEIAPEEKTSKNIKEEIFYPSQEEKMRLLLTLIEEDWPEKAIVFSNTKHSCETLWSWLEGDGHRVGLLTGDVPQKKRIRILEQFTSGQLDILVATDVAARGLHISDVSHVYNYDLPDDCEDYVHRIGRTGRAGNKGMSISFACEEYALNLPAIESYINHSIPVSNYDSEALLADIPTPAKIHRKHPSGTRNLRDRSGTSRPGAQRSGARPPRHDRTRRHS</sequence>